<reference key="1">
    <citation type="journal article" date="2004" name="Proc. Natl. Acad. Sci. U.S.A.">
        <title>Comparison of the genome of the oral pathogen Treponema denticola with other spirochete genomes.</title>
        <authorList>
            <person name="Seshadri R."/>
            <person name="Myers G.S.A."/>
            <person name="Tettelin H."/>
            <person name="Eisen J.A."/>
            <person name="Heidelberg J.F."/>
            <person name="Dodson R.J."/>
            <person name="Davidsen T.M."/>
            <person name="DeBoy R.T."/>
            <person name="Fouts D.E."/>
            <person name="Haft D.H."/>
            <person name="Selengut J."/>
            <person name="Ren Q."/>
            <person name="Brinkac L.M."/>
            <person name="Madupu R."/>
            <person name="Kolonay J.F."/>
            <person name="Durkin S.A."/>
            <person name="Daugherty S.C."/>
            <person name="Shetty J."/>
            <person name="Shvartsbeyn A."/>
            <person name="Gebregeorgis E."/>
            <person name="Geer K."/>
            <person name="Tsegaye G."/>
            <person name="Malek J.A."/>
            <person name="Ayodeji B."/>
            <person name="Shatsman S."/>
            <person name="McLeod M.P."/>
            <person name="Smajs D."/>
            <person name="Howell J.K."/>
            <person name="Pal S."/>
            <person name="Amin A."/>
            <person name="Vashisth P."/>
            <person name="McNeill T.Z."/>
            <person name="Xiang Q."/>
            <person name="Sodergren E."/>
            <person name="Baca E."/>
            <person name="Weinstock G.M."/>
            <person name="Norris S.J."/>
            <person name="Fraser C.M."/>
            <person name="Paulsen I.T."/>
        </authorList>
    </citation>
    <scope>NUCLEOTIDE SEQUENCE [LARGE SCALE GENOMIC DNA]</scope>
    <source>
        <strain>ATCC 35405 / DSM 14222 / CIP 103919 / JCM 8153 / KCTC 15104</strain>
    </source>
</reference>
<accession>Q73KR6</accession>
<evidence type="ECO:0000255" key="1">
    <source>
        <dbReference type="HAMAP-Rule" id="MF_00489"/>
    </source>
</evidence>
<protein>
    <recommendedName>
        <fullName evidence="1">UPF0178 protein TDE_2151</fullName>
    </recommendedName>
</protein>
<feature type="chain" id="PRO_0000176017" description="UPF0178 protein TDE_2151">
    <location>
        <begin position="1"/>
        <end position="155"/>
    </location>
</feature>
<dbReference type="EMBL" id="AE017226">
    <property type="protein sequence ID" value="AAS12671.1"/>
    <property type="molecule type" value="Genomic_DNA"/>
</dbReference>
<dbReference type="RefSeq" id="NP_972752.1">
    <property type="nucleotide sequence ID" value="NC_002967.9"/>
</dbReference>
<dbReference type="RefSeq" id="WP_002679987.1">
    <property type="nucleotide sequence ID" value="NC_002967.9"/>
</dbReference>
<dbReference type="STRING" id="243275.TDE_2151"/>
<dbReference type="PaxDb" id="243275-TDE_2151"/>
<dbReference type="GeneID" id="2739137"/>
<dbReference type="KEGG" id="tde:TDE_2151"/>
<dbReference type="PATRIC" id="fig|243275.7.peg.2032"/>
<dbReference type="eggNOG" id="COG1671">
    <property type="taxonomic scope" value="Bacteria"/>
</dbReference>
<dbReference type="HOGENOM" id="CLU_106619_2_0_12"/>
<dbReference type="OrthoDB" id="9798918at2"/>
<dbReference type="Proteomes" id="UP000008212">
    <property type="component" value="Chromosome"/>
</dbReference>
<dbReference type="CDD" id="cd18720">
    <property type="entry name" value="PIN_YqxD-like"/>
    <property type="match status" value="1"/>
</dbReference>
<dbReference type="HAMAP" id="MF_00489">
    <property type="entry name" value="UPF0178"/>
    <property type="match status" value="1"/>
</dbReference>
<dbReference type="InterPro" id="IPR003791">
    <property type="entry name" value="UPF0178"/>
</dbReference>
<dbReference type="PANTHER" id="PTHR35146">
    <property type="entry name" value="UPF0178 PROTEIN YAII"/>
    <property type="match status" value="1"/>
</dbReference>
<dbReference type="PANTHER" id="PTHR35146:SF1">
    <property type="entry name" value="UPF0178 PROTEIN YAII"/>
    <property type="match status" value="1"/>
</dbReference>
<dbReference type="Pfam" id="PF02639">
    <property type="entry name" value="DUF188"/>
    <property type="match status" value="1"/>
</dbReference>
<keyword id="KW-1185">Reference proteome</keyword>
<organism>
    <name type="scientific">Treponema denticola (strain ATCC 35405 / DSM 14222 / CIP 103919 / JCM 8153 / KCTC 15104)</name>
    <dbReference type="NCBI Taxonomy" id="243275"/>
    <lineage>
        <taxon>Bacteria</taxon>
        <taxon>Pseudomonadati</taxon>
        <taxon>Spirochaetota</taxon>
        <taxon>Spirochaetia</taxon>
        <taxon>Spirochaetales</taxon>
        <taxon>Treponemataceae</taxon>
        <taxon>Treponema</taxon>
    </lineage>
</organism>
<comment type="similarity">
    <text evidence="1">Belongs to the UPF0178 family.</text>
</comment>
<proteinExistence type="inferred from homology"/>
<name>Y2151_TREDE</name>
<sequence>MKIWVDADSCPVRIRQITAKAGERLKLPVIFAANREIPVPKGASMVVTENTEQAADLYITENSVEGDLAITRDIPLAKLLVDKGLYVINDRGTIFTRDNINTYLSARNFMYELQANGLAPEKTNSFGKKEIQKFSNLLDSLLAKALKQRHLDSRF</sequence>
<gene>
    <name type="ordered locus">TDE_2151</name>
</gene>